<organism>
    <name type="scientific">Influenza A virus (strain A/Gull/Maryland/1824/1978 H13N6)</name>
    <dbReference type="NCBI Taxonomy" id="385602"/>
    <lineage>
        <taxon>Viruses</taxon>
        <taxon>Riboviria</taxon>
        <taxon>Orthornavirae</taxon>
        <taxon>Negarnaviricota</taxon>
        <taxon>Polyploviricotina</taxon>
        <taxon>Insthoviricetes</taxon>
        <taxon>Articulavirales</taxon>
        <taxon>Orthomyxoviridae</taxon>
        <taxon>Alphainfluenzavirus</taxon>
        <taxon>Alphainfluenzavirus influenzae</taxon>
        <taxon>Influenza A virus</taxon>
    </lineage>
</organism>
<sequence>MDSNTVSSFQVDCFLWHVRKRFADQEMGDAPFLDRIRRDQKSLKGRSITLGIDIEAATRAGKLIIERILDEESDEALKMNIASVPASRYVTDMTPEEMSRDWFMLMPKQKFAGPLCIRMDQATLDKNIVLKANFSVAFDRLETLILLRAFTSEGAIVGEISQLPSLPGHTSEDVKNAIGILIGGLEWNDNTVRVSETLQRFAWGSSNENGRPPFAPKQERKMAGTVESEV</sequence>
<protein>
    <recommendedName>
        <fullName evidence="1">Non-structural protein 1</fullName>
        <shortName evidence="1">NS1</shortName>
    </recommendedName>
    <alternativeName>
        <fullName evidence="1">NS1A</fullName>
    </alternativeName>
</protein>
<feature type="chain" id="PRO_0000324264" description="Non-structural protein 1">
    <location>
        <begin position="1"/>
        <end position="230"/>
    </location>
</feature>
<feature type="region of interest" description="RNA-binding and homodimerization" evidence="1">
    <location>
        <begin position="1"/>
        <end position="73"/>
    </location>
</feature>
<feature type="region of interest" description="CPSF4-binding" evidence="1">
    <location>
        <begin position="180"/>
        <end position="215"/>
    </location>
</feature>
<feature type="region of interest" description="Disordered" evidence="2">
    <location>
        <begin position="204"/>
        <end position="230"/>
    </location>
</feature>
<feature type="region of interest" description="PABPN1-binding" evidence="1">
    <location>
        <begin position="223"/>
        <end position="230"/>
    </location>
</feature>
<feature type="short sequence motif" description="Nuclear localization signal" evidence="1">
    <location>
        <begin position="34"/>
        <end position="38"/>
    </location>
</feature>
<feature type="short sequence motif" description="Nuclear export signal" evidence="1">
    <location>
        <begin position="137"/>
        <end position="146"/>
    </location>
</feature>
<reference key="1">
    <citation type="journal article" date="1998" name="Virus Res.">
        <title>Multiple alignment comparison of the non-structural genes of influenza A viruses.</title>
        <authorList>
            <person name="Suarez D.L."/>
            <person name="Perdue M.L."/>
        </authorList>
    </citation>
    <scope>NUCLEOTIDE SEQUENCE [GENOMIC RNA]</scope>
</reference>
<proteinExistence type="inferred from homology"/>
<gene>
    <name evidence="1" type="primary">NS</name>
</gene>
<accession>O57274</accession>
<name>NS1_I78AF</name>
<organismHost>
    <name type="scientific">Aves</name>
    <dbReference type="NCBI Taxonomy" id="8782"/>
</organismHost>
<dbReference type="EMBL" id="U96743">
    <property type="protein sequence ID" value="AAB93945.1"/>
    <property type="molecule type" value="Genomic_RNA"/>
</dbReference>
<dbReference type="SMR" id="O57274"/>
<dbReference type="GO" id="GO:0030430">
    <property type="term" value="C:host cell cytoplasm"/>
    <property type="evidence" value="ECO:0007669"/>
    <property type="project" value="UniProtKB-SubCell"/>
</dbReference>
<dbReference type="GO" id="GO:0042025">
    <property type="term" value="C:host cell nucleus"/>
    <property type="evidence" value="ECO:0007669"/>
    <property type="project" value="UniProtKB-SubCell"/>
</dbReference>
<dbReference type="GO" id="GO:0030291">
    <property type="term" value="F:protein serine/threonine kinase inhibitor activity"/>
    <property type="evidence" value="ECO:0007669"/>
    <property type="project" value="UniProtKB-KW"/>
</dbReference>
<dbReference type="GO" id="GO:0003723">
    <property type="term" value="F:RNA binding"/>
    <property type="evidence" value="ECO:0007669"/>
    <property type="project" value="UniProtKB-KW"/>
</dbReference>
<dbReference type="GO" id="GO:0039540">
    <property type="term" value="P:symbiont-mediated suppression of host cytoplasmic pattern recognition receptor signaling pathway via inhibition of RIG-I activity"/>
    <property type="evidence" value="ECO:0007669"/>
    <property type="project" value="UniProtKB-KW"/>
</dbReference>
<dbReference type="GO" id="GO:0039657">
    <property type="term" value="P:symbiont-mediated suppression of host gene expression"/>
    <property type="evidence" value="ECO:0007669"/>
    <property type="project" value="UniProtKB-KW"/>
</dbReference>
<dbReference type="GO" id="GO:0039524">
    <property type="term" value="P:symbiont-mediated suppression of host mRNA processing"/>
    <property type="evidence" value="ECO:0007669"/>
    <property type="project" value="UniProtKB-KW"/>
</dbReference>
<dbReference type="GO" id="GO:0039580">
    <property type="term" value="P:symbiont-mediated suppression of host PKR/eIFalpha signaling"/>
    <property type="evidence" value="ECO:0007669"/>
    <property type="project" value="UniProtKB-KW"/>
</dbReference>
<dbReference type="GO" id="GO:0039502">
    <property type="term" value="P:symbiont-mediated suppression of host type I interferon-mediated signaling pathway"/>
    <property type="evidence" value="ECO:0007669"/>
    <property type="project" value="UniProtKB-KW"/>
</dbReference>
<dbReference type="FunFam" id="1.10.287.10:FF:000001">
    <property type="entry name" value="Non-structural protein 1"/>
    <property type="match status" value="1"/>
</dbReference>
<dbReference type="FunFam" id="3.30.420.330:FF:000001">
    <property type="entry name" value="Non-structural protein 1"/>
    <property type="match status" value="1"/>
</dbReference>
<dbReference type="Gene3D" id="3.30.420.330">
    <property type="entry name" value="Influenza virus non-structural protein, effector domain"/>
    <property type="match status" value="1"/>
</dbReference>
<dbReference type="Gene3D" id="1.10.287.10">
    <property type="entry name" value="S15/NS1, RNA-binding"/>
    <property type="match status" value="1"/>
</dbReference>
<dbReference type="HAMAP" id="MF_04066">
    <property type="entry name" value="INFV_NS1"/>
    <property type="match status" value="1"/>
</dbReference>
<dbReference type="InterPro" id="IPR004208">
    <property type="entry name" value="NS1"/>
</dbReference>
<dbReference type="InterPro" id="IPR000256">
    <property type="entry name" value="NS1A"/>
</dbReference>
<dbReference type="InterPro" id="IPR038064">
    <property type="entry name" value="NS1A_effect_dom-like_sf"/>
</dbReference>
<dbReference type="InterPro" id="IPR009068">
    <property type="entry name" value="uS15_NS1_RNA-bd_sf"/>
</dbReference>
<dbReference type="Pfam" id="PF00600">
    <property type="entry name" value="Flu_NS1"/>
    <property type="match status" value="1"/>
</dbReference>
<dbReference type="SUPFAM" id="SSF143021">
    <property type="entry name" value="Ns1 effector domain-like"/>
    <property type="match status" value="1"/>
</dbReference>
<dbReference type="SUPFAM" id="SSF47060">
    <property type="entry name" value="S15/NS1 RNA-binding domain"/>
    <property type="match status" value="1"/>
</dbReference>
<keyword id="KW-0025">Alternative splicing</keyword>
<keyword id="KW-1262">Eukaryotic host gene expression shutoff by virus</keyword>
<keyword id="KW-1035">Host cytoplasm</keyword>
<keyword id="KW-1190">Host gene expression shutoff by virus</keyword>
<keyword id="KW-1192">Host mRNA suppression by virus</keyword>
<keyword id="KW-1048">Host nucleus</keyword>
<keyword id="KW-0945">Host-virus interaction</keyword>
<keyword id="KW-1090">Inhibition of host innate immune response by virus</keyword>
<keyword id="KW-1114">Inhibition of host interferon signaling pathway by virus</keyword>
<keyword id="KW-1102">Inhibition of host PKR by virus</keyword>
<keyword id="KW-1103">Inhibition of host pre-mRNA processing by virus</keyword>
<keyword id="KW-1088">Inhibition of host RIG-I by virus</keyword>
<keyword id="KW-1113">Inhibition of host RLR pathway by virus</keyword>
<keyword id="KW-0922">Interferon antiviral system evasion</keyword>
<keyword id="KW-0694">RNA-binding</keyword>
<keyword id="KW-0832">Ubl conjugation</keyword>
<keyword id="KW-0899">Viral immunoevasion</keyword>
<evidence type="ECO:0000255" key="1">
    <source>
        <dbReference type="HAMAP-Rule" id="MF_04066"/>
    </source>
</evidence>
<evidence type="ECO:0000256" key="2">
    <source>
        <dbReference type="SAM" id="MobiDB-lite"/>
    </source>
</evidence>
<comment type="function">
    <text evidence="1">Inhibits post-transcriptional processing of cellular pre-mRNA, by binding and inhibiting two cellular proteins that are required for the 3'-end processing of cellular pre-mRNAs: the 30 kDa cleavage and polyadenylation specificity factor/CPSF4 and the poly(A)-binding protein 2/PABPN1. In turn, unprocessed 3' end pre-mRNAs accumulate in the host nucleus and are no longer exported to the cytoplasm. Cellular protein synthesis is thereby shut off very early after virus infection. Viral protein synthesis is not affected by the inhibition of the cellular 3' end processing machinery because the poly(A) tails of viral mRNAs are produced by the viral polymerase through a stuttering mechanism. Prevents the establishment of the cellular antiviral state by inhibiting TRIM25-mediated RIGI ubiquitination, which normally triggers the antiviral transduction signal that leads to the activation of type I IFN genes by transcription factors IRF3 and IRF7. Also binds poly(A) and U6 snRNA. Inhibits the integrated stress response (ISR) in the infected cell by blocking dsRNA binding by EIF2AK2/PKR and further phosphorylation of EIF2S1/EIF-2ALPHA. Stress granule formation is thus inhibited, which allows protein synthesis and viral replication.</text>
</comment>
<comment type="subunit">
    <text evidence="1">Homodimer. Interacts with host TRIM25 (via coiled coil); this interaction specifically inhibits TRIM25 multimerization and TRIM25-mediated RIGI CARD ubiquitination. Interacts with human EIF2AK2/PKR, CPSF4, IVNS1ABP and PABPN1.</text>
</comment>
<comment type="subcellular location">
    <subcellularLocation>
        <location evidence="1">Host nucleus</location>
    </subcellularLocation>
    <subcellularLocation>
        <location evidence="1">Host cytoplasm</location>
    </subcellularLocation>
    <text evidence="1">In uninfected, transfected cells, NS1 is localized in the nucleus. Only in virus infected cells, the nuclear export signal is unveiled, presumably by a viral protein, and a fraction of NS1 is exported in the cytoplasm.</text>
</comment>
<comment type="alternative products">
    <event type="alternative splicing"/>
    <isoform>
        <id>O57274-1</id>
        <name>NS1</name>
        <sequence type="displayed"/>
    </isoform>
    <isoform>
        <id>O57273-1</id>
        <name>NEP</name>
        <name>NS2</name>
        <sequence type="external"/>
    </isoform>
</comment>
<comment type="domain">
    <text evidence="1">The dsRNA-binding region is required for suppression of RNA silencing.</text>
</comment>
<comment type="PTM">
    <text evidence="1">Upon interferon induction, ISGylated via host HERC5; this results in the impairment of NS1 interaction with RNA targets due to its inability to form homodimers and to interact with host EIF2AK2/PKR.</text>
</comment>
<comment type="similarity">
    <text evidence="1">Belongs to the influenza A viruses NS1 family.</text>
</comment>